<comment type="function">
    <text evidence="8 9 10">Promotes the nuclear export of a subset of early and late viral mRNAs by interacting with mRNAs and cellular export proteins. Additionally may prevent the establishment of cellular antiviral state, by acting as an alternative splicing factor for cellular RNAs such as STAT1, resulting in a STAT1 mRNA incapable of producing the STAT1alpha isoform.</text>
</comment>
<comment type="subunit">
    <text evidence="3 5 6 9 10 11">Interacts with host XPO1 and with the XPO1 export pathway components small GTPase RAN and nucleoporin NUP214 (PubMed:10400785). Interacts with host SPEN, OTT1 and OTT3 (PubMed:16129689). Interacts with host SRSF1, SRSF3, SRSF7 and SRPK1 (PubMed:22505578). Interacts with host DHX9; this interaction may have an inhibitory effect on virion production (PubMed:30541834). Interacts (via N-terminus) with host NXF1; this interaction plays a role in mRNA export (PubMed:19793817).</text>
</comment>
<comment type="subcellular location">
    <subcellularLocation>
        <location evidence="4">Host nucleus</location>
    </subcellularLocation>
    <subcellularLocation>
        <location evidence="4">Host cytoplasm</location>
    </subcellularLocation>
    <text>shuttles between the nucleus and the cytoplasm.</text>
</comment>
<comment type="PTM">
    <text evidence="7">Phosphorylated by cellular protein kinase CK2.</text>
</comment>
<comment type="similarity">
    <text evidence="13">Belongs to the HHV-1 ICP27 protein family.</text>
</comment>
<comment type="sequence caution" evidence="13">
    <conflict type="erroneous gene model prediction">
        <sequence resource="EMBL-CDS" id="CAA24846"/>
    </conflict>
    <text>Produced from a longuer mRNA than expected which is spliced so that BSFL2 and BMLF1 ORFs are fused.</text>
</comment>
<comment type="sequence caution" evidence="13">
    <conflict type="erroneous gene model prediction">
        <sequence resource="EMBL-CDS" id="CAB56340"/>
    </conflict>
    <text>Produced from a longuer mRNA than expected which is spliced so that BSFL2 and BMLF1 ORFs are fused.</text>
</comment>
<comment type="sequence caution" evidence="13">
    <conflict type="erroneous gene model prediction">
        <sequence resource="EMBL-CDS" id="CAD53409"/>
    </conflict>
    <text>Produced from a longuer mRNA than expected which is spliced so that BSFL2 and BMLF1 ORFs are fused.</text>
</comment>
<comment type="sequence caution" evidence="13">
    <conflict type="erroneous gene model prediction">
        <sequence resource="EMBL-CDS" id="CAD53411"/>
    </conflict>
    <text>Produced from a longuer mRNA than expected which is spliced so that BSFL2 and BMLF1 ORFs are fused.</text>
</comment>
<proteinExistence type="evidence at protein level"/>
<evidence type="ECO:0000250" key="1">
    <source>
        <dbReference type="UniProtKB" id="P10238"/>
    </source>
</evidence>
<evidence type="ECO:0000256" key="2">
    <source>
        <dbReference type="SAM" id="MobiDB-lite"/>
    </source>
</evidence>
<evidence type="ECO:0000269" key="3">
    <source>
    </source>
</evidence>
<evidence type="ECO:0000269" key="4">
    <source>
    </source>
</evidence>
<evidence type="ECO:0000269" key="5">
    <source>
    </source>
</evidence>
<evidence type="ECO:0000269" key="6">
    <source>
    </source>
</evidence>
<evidence type="ECO:0000269" key="7">
    <source>
    </source>
</evidence>
<evidence type="ECO:0000269" key="8">
    <source>
    </source>
</evidence>
<evidence type="ECO:0000269" key="9">
    <source>
    </source>
</evidence>
<evidence type="ECO:0000269" key="10">
    <source>
    </source>
</evidence>
<evidence type="ECO:0000269" key="11">
    <source>
    </source>
</evidence>
<evidence type="ECO:0000303" key="12">
    <source>
    </source>
</evidence>
<evidence type="ECO:0000305" key="13"/>
<dbReference type="EMBL" id="V01555">
    <property type="protein sequence ID" value="CAB56340.1"/>
    <property type="status" value="ALT_SEQ"/>
    <property type="molecule type" value="Genomic_DNA"/>
</dbReference>
<dbReference type="EMBL" id="V01555">
    <property type="protein sequence ID" value="CAA24846.1"/>
    <property type="status" value="ALT_SEQ"/>
    <property type="molecule type" value="Genomic_DNA"/>
</dbReference>
<dbReference type="EMBL" id="AJ507799">
    <property type="protein sequence ID" value="CAD53409.1"/>
    <property type="status" value="ALT_SEQ"/>
    <property type="molecule type" value="Genomic_DNA"/>
</dbReference>
<dbReference type="EMBL" id="AJ507799">
    <property type="protein sequence ID" value="CAD53410.1"/>
    <property type="molecule type" value="Genomic_DNA"/>
</dbReference>
<dbReference type="EMBL" id="AJ507799">
    <property type="protein sequence ID" value="CAD53411.1"/>
    <property type="status" value="ALT_SEQ"/>
    <property type="molecule type" value="Genomic_DNA"/>
</dbReference>
<dbReference type="PIR" id="S33000">
    <property type="entry name" value="S33000"/>
</dbReference>
<dbReference type="PIR" id="S33001">
    <property type="entry name" value="S33001"/>
</dbReference>
<dbReference type="RefSeq" id="YP_401660.1">
    <property type="nucleotide sequence ID" value="NC_007605.1"/>
</dbReference>
<dbReference type="RefSeq" id="YP_401661.1">
    <property type="nucleotide sequence ID" value="NC_007605.1"/>
</dbReference>
<dbReference type="SMR" id="Q04360"/>
<dbReference type="IntAct" id="Q04360">
    <property type="interactions" value="10"/>
</dbReference>
<dbReference type="MINT" id="Q04360"/>
<dbReference type="KEGG" id="vg:3783758"/>
<dbReference type="Proteomes" id="UP000153037">
    <property type="component" value="Segment"/>
</dbReference>
<dbReference type="GO" id="GO:0030430">
    <property type="term" value="C:host cell cytoplasm"/>
    <property type="evidence" value="ECO:0007669"/>
    <property type="project" value="UniProtKB-SubCell"/>
</dbReference>
<dbReference type="GO" id="GO:0044095">
    <property type="term" value="C:host cell nucleoplasm"/>
    <property type="evidence" value="ECO:0000314"/>
    <property type="project" value="UniProtKB"/>
</dbReference>
<dbReference type="GO" id="GO:0030291">
    <property type="term" value="F:protein serine/threonine kinase inhibitor activity"/>
    <property type="evidence" value="ECO:0007669"/>
    <property type="project" value="UniProtKB-KW"/>
</dbReference>
<dbReference type="GO" id="GO:0003723">
    <property type="term" value="F:RNA binding"/>
    <property type="evidence" value="ECO:0007669"/>
    <property type="project" value="UniProtKB-KW"/>
</dbReference>
<dbReference type="GO" id="GO:0008270">
    <property type="term" value="F:zinc ion binding"/>
    <property type="evidence" value="ECO:0007669"/>
    <property type="project" value="UniProtKB-KW"/>
</dbReference>
<dbReference type="GO" id="GO:0051028">
    <property type="term" value="P:mRNA transport"/>
    <property type="evidence" value="ECO:0007669"/>
    <property type="project" value="UniProtKB-KW"/>
</dbReference>
<dbReference type="GO" id="GO:0006355">
    <property type="term" value="P:regulation of DNA-templated transcription"/>
    <property type="evidence" value="ECO:0007669"/>
    <property type="project" value="InterPro"/>
</dbReference>
<dbReference type="GO" id="GO:0052170">
    <property type="term" value="P:symbiont-mediated suppression of host innate immune response"/>
    <property type="evidence" value="ECO:0007669"/>
    <property type="project" value="UniProtKB-KW"/>
</dbReference>
<dbReference type="GO" id="GO:0039580">
    <property type="term" value="P:symbiont-mediated suppression of host PKR/eIFalpha signaling"/>
    <property type="evidence" value="ECO:0007669"/>
    <property type="project" value="UniProtKB-KW"/>
</dbReference>
<dbReference type="GO" id="GO:0039502">
    <property type="term" value="P:symbiont-mediated suppression of host type I interferon-mediated signaling pathway"/>
    <property type="evidence" value="ECO:0007669"/>
    <property type="project" value="UniProtKB-KW"/>
</dbReference>
<dbReference type="InterPro" id="IPR008648">
    <property type="entry name" value="ICP27-like"/>
</dbReference>
<dbReference type="Pfam" id="PF05459">
    <property type="entry name" value="Herpes_UL69"/>
    <property type="match status" value="1"/>
</dbReference>
<reference key="1">
    <citation type="journal article" date="1984" name="Nature">
        <title>DNA sequence and expression of the B95-8 Epstein-Barr virus genome.</title>
        <authorList>
            <person name="Baer R."/>
            <person name="Bankier A.T."/>
            <person name="Biggin M.D."/>
            <person name="Deininger P.L."/>
            <person name="Farrell P.J."/>
            <person name="Gibson T.J."/>
            <person name="Hatfull G."/>
            <person name="Hudson G.S."/>
            <person name="Satchwell S.C."/>
            <person name="Seguin C."/>
            <person name="Tuffnell P.S."/>
            <person name="Barrell B.G."/>
        </authorList>
    </citation>
    <scope>NUCLEOTIDE SEQUENCE [LARGE SCALE GENOMIC DNA]</scope>
</reference>
<reference key="2">
    <citation type="journal article" date="2003" name="Virology">
        <title>Updated Epstein-Barr virus (EBV) DNA sequence and analysis of a promoter for the BART (CST, BARF0) RNAs of EBV.</title>
        <authorList>
            <person name="de Jesus O."/>
            <person name="Smith P.R."/>
            <person name="Spender L.C."/>
            <person name="Elgueta Karstegl C."/>
            <person name="Niller H.H."/>
            <person name="Huang D."/>
            <person name="Farrell P.J."/>
        </authorList>
    </citation>
    <scope>GENOME REANNOTATION</scope>
</reference>
<reference key="3">
    <citation type="journal article" date="1999" name="J. Virol.">
        <title>Association with the cellular export receptor CRM 1 mediates function and intracellular localization of Epstein-Barr virus SM protein, a regulator of gene expression.</title>
        <authorList>
            <person name="Boyle S.M."/>
            <person name="Ruvolo V."/>
            <person name="Gupta A.K."/>
            <person name="Swaminathan S."/>
        </authorList>
    </citation>
    <scope>INTERACTION WITH HUMAN XPO1</scope>
</reference>
<reference key="4">
    <citation type="journal article" date="2000" name="J. Virol.">
        <title>Epstein-Barr virus EB2 protein exports unspliced RNA via a Crm-1-independent pathway.</title>
        <authorList>
            <person name="Farjot G."/>
            <person name="Buisson M."/>
            <person name="Duc Dodon M."/>
            <person name="Gazzolo L."/>
            <person name="Sergeant A."/>
            <person name="Mikaelian I."/>
        </authorList>
    </citation>
    <scope>SUBCELLULAR LOCATION</scope>
</reference>
<reference key="5">
    <citation type="journal article" date="2001" name="J. Virol.">
        <title>Epstein-Barr virus SM protein interacts with mRNA in vivo and mediates a gene-specific increase in cytoplasmic mRNA.</title>
        <authorList>
            <person name="Ruvolo V."/>
            <person name="Gupta A.K."/>
            <person name="Swaminathan S."/>
        </authorList>
    </citation>
    <scope>RNA-BINDING</scope>
</reference>
<reference key="6">
    <citation type="journal article" date="2003" name="J. Biol. Chem.">
        <title>A novel nuclear export signal and a REF interaction domain both promote mRNA export by the Epstein-Barr virus EB2 protein.</title>
        <authorList>
            <person name="Hiriart E."/>
            <person name="Farjot G."/>
            <person name="Gruffat H."/>
            <person name="Nguyen M.V."/>
            <person name="Sergeant A."/>
            <person name="Manet E."/>
        </authorList>
    </citation>
    <scope>INTERACTION WITH HUMAN REF</scope>
    <scope>NUCLEAR LOCALIZATION SIGNAL</scope>
</reference>
<reference key="7">
    <citation type="journal article" date="2005" name="J. Biol. Chem.">
        <title>Interaction of the Epstein-Barr virus mRNA export factor EB2 with human Spen proteins SHARP, OTT1, and a novel member of the family, OTT3, links Spen proteins with splicing regulation and mRNA export.</title>
        <authorList>
            <person name="Hiriart E."/>
            <person name="Gruffat H."/>
            <person name="Buisson M."/>
            <person name="Mikaelian I."/>
            <person name="Keppler S."/>
            <person name="Meresse P."/>
            <person name="Mercher T."/>
            <person name="Bernard O.A."/>
            <person name="Sergeant A."/>
            <person name="Manet E."/>
        </authorList>
    </citation>
    <scope>INTERACTION WITH HUMAN SPEN; OTT1 AND OTT3</scope>
</reference>
<reference key="8">
    <citation type="journal article" date="2007" name="J. Virol.">
        <title>Protein kinase CK2 phosphorylation of EB2 regulates its function in the production of Epstein-Barr virus infectious viral particles.</title>
        <authorList>
            <person name="Medina-Palazon C."/>
            <person name="Gruffat H."/>
            <person name="Mure F."/>
            <person name="Filhol O."/>
            <person name="Vingtdeux-Didier V."/>
            <person name="Drobecq H."/>
            <person name="Cochet C."/>
            <person name="Sergeant N."/>
            <person name="Sergeant A."/>
            <person name="Manet E."/>
        </authorList>
    </citation>
    <scope>PHOSPHORYLATION BY HUMAN CK2</scope>
</reference>
<reference key="9">
    <citation type="journal article" date="2008" name="J. Virol.">
        <title>Epstein-Barr virus SM protein functions as an alternative splicing factor.</title>
        <authorList>
            <person name="Verma D."/>
            <person name="Swaminathan S."/>
        </authorList>
    </citation>
    <scope>FUNCTION IN ALTERNATIVE SPLICING</scope>
</reference>
<reference key="10">
    <citation type="journal article" date="2009" name="J. Virol.">
        <title>Epstein-Barr virus protein EB2 contains an N-terminal transferable nuclear export signal that promotes nucleocytoplasmic export by directly binding TAP/NXF1.</title>
        <authorList>
            <person name="Juillard F."/>
            <person name="Hiriart E."/>
            <person name="Sergeant N."/>
            <person name="Vingtdeux-Didier V."/>
            <person name="Drobecq H."/>
            <person name="Sergeant A."/>
            <person name="Manet E."/>
            <person name="Gruffat H."/>
        </authorList>
    </citation>
    <scope>FUNCTION</scope>
    <scope>NUCLEAR EXPORT SIGNAL</scope>
    <scope>INTERACTION WITH HOST NXF1</scope>
</reference>
<reference key="11">
    <citation type="journal article" date="2012" name="Nucleic Acids Res.">
        <title>Epstein-Barr virus protein EB2 stimulates cytoplasmic mRNA accumulation by counteracting the deleterious effects of SRp20 on viral mRNAs.</title>
        <authorList>
            <person name="Juillard F."/>
            <person name="Bazot Q."/>
            <person name="Mure F."/>
            <person name="Tafforeau L."/>
            <person name="Macri C."/>
            <person name="Rabourdin-Combe C."/>
            <person name="Lotteau V."/>
            <person name="Manet E."/>
            <person name="Gruffat H."/>
        </authorList>
    </citation>
    <scope>FUNCTION</scope>
    <scope>INTERACTION WITH HUMAN SRSF1; SRSF3; SRSF7 AND SRPK1</scope>
</reference>
<reference key="12">
    <citation type="journal article" date="2019" name="J. Virol.">
        <title>Cellular RNA Helicase DHX9 Interacts with the Essential Epstein-Barr Virus (EBV) Protein SM and Restricts EBV Lytic Replication.</title>
        <authorList>
            <person name="Fu W."/>
            <person name="Verma D."/>
            <person name="Burton A."/>
            <person name="Swaminathan S."/>
        </authorList>
    </citation>
    <scope>INTERACTION WITH HOST DHX9</scope>
</reference>
<keyword id="KW-0244">Early protein</keyword>
<keyword id="KW-1035">Host cytoplasm</keyword>
<keyword id="KW-1048">Host nucleus</keyword>
<keyword id="KW-0945">Host-virus interaction</keyword>
<keyword id="KW-1090">Inhibition of host innate immune response by virus</keyword>
<keyword id="KW-1114">Inhibition of host interferon signaling pathway by virus</keyword>
<keyword id="KW-1102">Inhibition of host PKR by virus</keyword>
<keyword id="KW-0922">Interferon antiviral system evasion</keyword>
<keyword id="KW-0479">Metal-binding</keyword>
<keyword id="KW-0509">mRNA transport</keyword>
<keyword id="KW-0597">Phosphoprotein</keyword>
<keyword id="KW-1185">Reference proteome</keyword>
<keyword id="KW-0694">RNA-binding</keyword>
<keyword id="KW-0804">Transcription</keyword>
<keyword id="KW-0805">Transcription regulation</keyword>
<keyword id="KW-0813">Transport</keyword>
<keyword id="KW-0899">Viral immunoevasion</keyword>
<keyword id="KW-0862">Zinc</keyword>
<keyword id="KW-0863">Zinc-finger</keyword>
<feature type="chain" id="PRO_0000115833" description="mRNA export factor ICP27 homolog">
    <location>
        <begin position="1"/>
        <end position="479"/>
    </location>
</feature>
<feature type="zinc finger region" description="CHC2-type" evidence="1">
    <location>
        <begin position="354"/>
        <end position="454"/>
    </location>
</feature>
<feature type="region of interest" description="Disordered" evidence="2">
    <location>
        <begin position="1"/>
        <end position="77"/>
    </location>
</feature>
<feature type="region of interest" description="Nuclear export signal and interaction with host NXF1" evidence="9">
    <location>
        <begin position="61"/>
        <end position="146"/>
    </location>
</feature>
<feature type="region of interest" description="Disordered" evidence="2">
    <location>
        <begin position="91"/>
        <end position="210"/>
    </location>
</feature>
<feature type="region of interest" description="Nuclear localization signal" evidence="5">
    <location>
        <begin position="127"/>
        <end position="130"/>
    </location>
</feature>
<feature type="region of interest" description="Nuclear localization signal" evidence="5">
    <location>
        <begin position="143"/>
        <end position="145"/>
    </location>
</feature>
<feature type="compositionally biased region" description="Low complexity" evidence="2">
    <location>
        <begin position="1"/>
        <end position="15"/>
    </location>
</feature>
<feature type="compositionally biased region" description="Acidic residues" evidence="2">
    <location>
        <begin position="35"/>
        <end position="44"/>
    </location>
</feature>
<feature type="compositionally biased region" description="Basic and acidic residues" evidence="2">
    <location>
        <begin position="132"/>
        <end position="142"/>
    </location>
</feature>
<feature type="binding site" evidence="1">
    <location>
        <position position="354"/>
    </location>
    <ligand>
        <name>Zn(2+)</name>
        <dbReference type="ChEBI" id="CHEBI:29105"/>
    </ligand>
</feature>
<feature type="binding site" evidence="1">
    <location>
        <position position="445"/>
    </location>
    <ligand>
        <name>Zn(2+)</name>
        <dbReference type="ChEBI" id="CHEBI:29105"/>
    </ligand>
</feature>
<feature type="binding site" evidence="1">
    <location>
        <position position="449"/>
    </location>
    <ligand>
        <name>Zn(2+)</name>
        <dbReference type="ChEBI" id="CHEBI:29105"/>
    </ligand>
</feature>
<feature type="binding site" evidence="1">
    <location>
        <position position="454"/>
    </location>
    <ligand>
        <name>Zn(2+)</name>
        <dbReference type="ChEBI" id="CHEBI:29105"/>
    </ligand>
</feature>
<organismHost>
    <name type="scientific">Homo sapiens</name>
    <name type="common">Human</name>
    <dbReference type="NCBI Taxonomy" id="9606"/>
</organismHost>
<accession>Q04360</accession>
<accession>Q777F7</accession>
<accession>Q8AZJ9</accession>
<accession>Q9QCF1</accession>
<name>ICP27_EBVB9</name>
<protein>
    <recommendedName>
        <fullName>mRNA export factor ICP27 homolog</fullName>
    </recommendedName>
    <alternativeName>
        <fullName>Mta</fullName>
    </alternativeName>
    <alternativeName>
        <fullName>ORF57 protein homolog</fullName>
    </alternativeName>
    <alternativeName>
        <fullName evidence="12">Protein EB2</fullName>
    </alternativeName>
    <alternativeName>
        <fullName>Protein SM</fullName>
    </alternativeName>
</protein>
<gene>
    <name type="ORF">BMLF1</name>
</gene>
<gene>
    <name type="ORF">BSLF2</name>
</gene>
<organism>
    <name type="scientific">Epstein-Barr virus (strain B95-8)</name>
    <name type="common">HHV-4</name>
    <name type="synonym">Human herpesvirus 4</name>
    <dbReference type="NCBI Taxonomy" id="10377"/>
    <lineage>
        <taxon>Viruses</taxon>
        <taxon>Duplodnaviria</taxon>
        <taxon>Heunggongvirae</taxon>
        <taxon>Peploviricota</taxon>
        <taxon>Herviviricetes</taxon>
        <taxon>Herpesvirales</taxon>
        <taxon>Orthoherpesviridae</taxon>
        <taxon>Gammaherpesvirinae</taxon>
        <taxon>Lymphocryptovirus</taxon>
        <taxon>Lymphocryptovirus humangamma4</taxon>
        <taxon>Epstein-Barr virus (strain GD1)</taxon>
    </lineage>
</organism>
<sequence>MVPSQRLSRTSSISSNEDPAESHILELEAVSDTNTDCDLDPMEGSEEHSTDGEISSSEEEDEDPTPAHAIPARPSSVVITPTSASFVIPRKKWDLQDKTVTLHRSPLCRDEDEKEETGNSSYTRGHKRRRGEVHGCTDESYGKRRHLPPGARAPRAPRAPRVPRAPRSPRAPRSNRATRGPRSESRGAGRSTRKQARQERSQRPLPNKPWFDMSLVKPVSKITFVTLPSPLASLTLEPIQDPFLQSMLAVAAHPEIGAWQKVQPRHELRRSYKTLREFFTKSTNKDTWLDARMQAIQNAGLCTLVAMLEETIFWLQEITYHGDLPLAPAEDILLACAMSLSKVILTKLKELAPCFLPNTRDYNFVKQLFYITCATARQNKVVETLSSSYVKQPLCLLAAYAAVAPAYINANCRRRHDEVEFLGHYIKNYNPGTLSSLLTEAVETHTRDCRSASCSRLVRAILSPGTGSLGLFFVPGLNQ</sequence>